<evidence type="ECO:0000256" key="1">
    <source>
        <dbReference type="SAM" id="MobiDB-lite"/>
    </source>
</evidence>
<evidence type="ECO:0000269" key="2">
    <source>
    </source>
</evidence>
<dbReference type="EMBL" id="X54459">
    <property type="protein sequence ID" value="CAA38335.1"/>
    <property type="molecule type" value="Genomic_DNA"/>
</dbReference>
<dbReference type="PIR" id="S23000">
    <property type="entry name" value="S23000"/>
</dbReference>
<organism>
    <name type="scientific">Escherichia coli</name>
    <dbReference type="NCBI Taxonomy" id="562"/>
    <lineage>
        <taxon>Bacteria</taxon>
        <taxon>Pseudomonadati</taxon>
        <taxon>Pseudomonadota</taxon>
        <taxon>Gammaproteobacteria</taxon>
        <taxon>Enterobacterales</taxon>
        <taxon>Enterobacteriaceae</taxon>
        <taxon>Escherichia</taxon>
    </lineage>
</organism>
<geneLocation type="plasmid">
    <name>IncP-alpha RP4</name>
</geneLocation>
<feature type="initiator methionine" description="Removed" evidence="2">
    <location>
        <position position="1"/>
    </location>
</feature>
<feature type="chain" id="PRO_0000068596" description="Protein TraH">
    <location>
        <begin position="2"/>
        <end position="119"/>
    </location>
</feature>
<feature type="region of interest" description="Disordered" evidence="1">
    <location>
        <begin position="1"/>
        <end position="67"/>
    </location>
</feature>
<feature type="compositionally biased region" description="Low complexity" evidence="1">
    <location>
        <begin position="41"/>
        <end position="54"/>
    </location>
</feature>
<comment type="function">
    <text>The initiation process of transfer DNA synthesis requires the interaction of at least three plasmid-specific components (TraH, TraI, and TraJ) at the transfer origin resulting in the assembly of a specialized nucleoprotein complex - the relaxosome.</text>
</comment>
<protein>
    <recommendedName>
        <fullName>Protein TraH</fullName>
    </recommendedName>
</protein>
<accession>Q00190</accession>
<gene>
    <name type="primary">traH</name>
</gene>
<proteinExistence type="evidence at protein level"/>
<sequence length="119" mass="12869">MSNPNEMTDEEIAAAMEAFDLPQPEPPSTPQAATATDGTLAPSAPAEPSHSASPTLDALDESRRPKAKTVCERCPNSVWFASPAELKCYCRVMFLVTWSSKEPNQLTHCDGEFLGQEEG</sequence>
<keyword id="KW-0184">Conjugation</keyword>
<keyword id="KW-0903">Direct protein sequencing</keyword>
<keyword id="KW-0614">Plasmid</keyword>
<reference key="1">
    <citation type="journal article" date="1991" name="DNA Seq.">
        <title>Nucleotide sequence and organization of genes flanking the transfer origin of promiscuous plasmid RP4.</title>
        <authorList>
            <person name="Ziegelin G."/>
            <person name="Pansegrau W."/>
            <person name="Strack B."/>
            <person name="Balzer D."/>
            <person name="Kroeger M."/>
            <person name="Kruft V."/>
            <person name="Lanka E."/>
        </authorList>
    </citation>
    <scope>NUCLEOTIDE SEQUENCE [GENOMIC DNA]</scope>
    <scope>PROTEIN SEQUENCE OF 2-6</scope>
    <source>
        <strain>ATCC 33694 / HB101</strain>
    </source>
</reference>
<name>TRAH4_ECOLX</name>